<comment type="function">
    <text evidence="1">RuBisCO catalyzes two reactions: the carboxylation of D-ribulose 1,5-bisphosphate, the primary event in carbon dioxide fixation, as well as the oxidative fragmentation of the pentose substrate in the photorespiration process. Both reactions occur simultaneously and in competition at the same active site.</text>
</comment>
<comment type="catalytic activity">
    <reaction evidence="1">
        <text>2 (2R)-3-phosphoglycerate + 2 H(+) = D-ribulose 1,5-bisphosphate + CO2 + H2O</text>
        <dbReference type="Rhea" id="RHEA:23124"/>
        <dbReference type="ChEBI" id="CHEBI:15377"/>
        <dbReference type="ChEBI" id="CHEBI:15378"/>
        <dbReference type="ChEBI" id="CHEBI:16526"/>
        <dbReference type="ChEBI" id="CHEBI:57870"/>
        <dbReference type="ChEBI" id="CHEBI:58272"/>
        <dbReference type="EC" id="4.1.1.39"/>
    </reaction>
</comment>
<comment type="catalytic activity">
    <reaction evidence="1">
        <text>D-ribulose 1,5-bisphosphate + O2 = 2-phosphoglycolate + (2R)-3-phosphoglycerate + 2 H(+)</text>
        <dbReference type="Rhea" id="RHEA:36631"/>
        <dbReference type="ChEBI" id="CHEBI:15378"/>
        <dbReference type="ChEBI" id="CHEBI:15379"/>
        <dbReference type="ChEBI" id="CHEBI:57870"/>
        <dbReference type="ChEBI" id="CHEBI:58033"/>
        <dbReference type="ChEBI" id="CHEBI:58272"/>
    </reaction>
</comment>
<comment type="cofactor">
    <cofactor evidence="1">
        <name>Mg(2+)</name>
        <dbReference type="ChEBI" id="CHEBI:18420"/>
    </cofactor>
    <text evidence="1">Binds 1 Mg(2+) ion per subunit.</text>
</comment>
<comment type="subunit">
    <text evidence="1">Heterohexadecamer of 8 large chains and 8 small chains; disulfide-linked. The disulfide link is formed within the large subunit homodimers.</text>
</comment>
<comment type="subcellular location">
    <subcellularLocation>
        <location>Plastid</location>
        <location>Chloroplast</location>
    </subcellularLocation>
</comment>
<comment type="PTM">
    <text evidence="1">The disulfide bond which can form in the large chain dimeric partners within the hexadecamer appears to be associated with oxidative stress and protein turnover.</text>
</comment>
<comment type="miscellaneous">
    <text evidence="1">The basic functional RuBisCO is composed of a large chain homodimer in a 'head-to-tail' conformation. In form I RuBisCO this homodimer is arranged in a barrel-like tetramer with the small subunits forming a tetrameric 'cap' on each end of the 'barrel'.</text>
</comment>
<comment type="similarity">
    <text evidence="1">Belongs to the RuBisCO large chain family. Type I subfamily.</text>
</comment>
<accession>Q9MUT6</accession>
<accession>Q32647</accession>
<proteinExistence type="inferred from homology"/>
<feature type="propeptide" id="PRO_0000031305" evidence="1">
    <location>
        <begin position="1"/>
        <end position="2"/>
    </location>
</feature>
<feature type="chain" id="PRO_0000031306" description="Ribulose bisphosphate carboxylase large chain">
    <location>
        <begin position="3"/>
        <end position="475"/>
    </location>
</feature>
<feature type="active site" description="Proton acceptor" evidence="1">
    <location>
        <position position="175"/>
    </location>
</feature>
<feature type="active site" description="Proton acceptor" evidence="1">
    <location>
        <position position="294"/>
    </location>
</feature>
<feature type="binding site" description="in homodimeric partner" evidence="1">
    <location>
        <position position="123"/>
    </location>
    <ligand>
        <name>substrate</name>
    </ligand>
</feature>
<feature type="binding site" evidence="1">
    <location>
        <position position="173"/>
    </location>
    <ligand>
        <name>substrate</name>
    </ligand>
</feature>
<feature type="binding site" evidence="1">
    <location>
        <position position="177"/>
    </location>
    <ligand>
        <name>substrate</name>
    </ligand>
</feature>
<feature type="binding site" description="via carbamate group" evidence="1">
    <location>
        <position position="201"/>
    </location>
    <ligand>
        <name>Mg(2+)</name>
        <dbReference type="ChEBI" id="CHEBI:18420"/>
    </ligand>
</feature>
<feature type="binding site" evidence="1">
    <location>
        <position position="203"/>
    </location>
    <ligand>
        <name>Mg(2+)</name>
        <dbReference type="ChEBI" id="CHEBI:18420"/>
    </ligand>
</feature>
<feature type="binding site" evidence="1">
    <location>
        <position position="204"/>
    </location>
    <ligand>
        <name>Mg(2+)</name>
        <dbReference type="ChEBI" id="CHEBI:18420"/>
    </ligand>
</feature>
<feature type="binding site" evidence="1">
    <location>
        <position position="295"/>
    </location>
    <ligand>
        <name>substrate</name>
    </ligand>
</feature>
<feature type="binding site" evidence="1">
    <location>
        <position position="327"/>
    </location>
    <ligand>
        <name>substrate</name>
    </ligand>
</feature>
<feature type="binding site" evidence="1">
    <location>
        <position position="379"/>
    </location>
    <ligand>
        <name>substrate</name>
    </ligand>
</feature>
<feature type="site" description="Transition state stabilizer" evidence="1">
    <location>
        <position position="334"/>
    </location>
</feature>
<feature type="modified residue" description="N-acetylproline" evidence="1">
    <location>
        <position position="3"/>
    </location>
</feature>
<feature type="modified residue" description="N6,N6,N6-trimethyllysine" evidence="1">
    <location>
        <position position="14"/>
    </location>
</feature>
<feature type="modified residue" description="N6-carboxylysine" evidence="1">
    <location>
        <position position="201"/>
    </location>
</feature>
<feature type="disulfide bond" description="Interchain; in linked form" evidence="1">
    <location>
        <position position="247"/>
    </location>
</feature>
<feature type="sequence conflict" description="In Ref. 2; AAA87208." evidence="2" ref="2">
    <original>F</original>
    <variation>L</variation>
    <location>
        <position position="13"/>
    </location>
</feature>
<feature type="sequence conflict" description="In Ref. 2; AAA87208." evidence="2" ref="2">
    <original>D</original>
    <variation>R</variation>
    <location>
        <position position="160"/>
    </location>
</feature>
<feature type="sequence conflict" description="In Ref. 2; AAA87208." evidence="2" ref="2">
    <original>Y</original>
    <variation>N</variation>
    <location>
        <position position="239"/>
    </location>
</feature>
<feature type="sequence conflict" description="In Ref. 2; AAA87208." evidence="2" ref="2">
    <original>A</original>
    <variation>S</variation>
    <location>
        <position position="245"/>
    </location>
</feature>
<feature type="sequence conflict" description="In Ref. 2; AAA87208." evidence="2" ref="2">
    <original>L</original>
    <variation>M</variation>
    <location>
        <position position="251"/>
    </location>
</feature>
<feature type="sequence conflict" description="In Ref. 2; AAA87208." evidence="2" ref="2">
    <original>AA</original>
    <variation>SH</variation>
    <location>
        <begin position="281"/>
        <end position="282"/>
    </location>
</feature>
<feature type="sequence conflict" description="In Ref. 2; AAA87208." evidence="2" ref="2">
    <original>LHIH</original>
    <variation>PSHS</variation>
    <location>
        <begin position="291"/>
        <end position="294"/>
    </location>
</feature>
<geneLocation type="chloroplast"/>
<gene>
    <name evidence="1" type="primary">rbcL</name>
</gene>
<keyword id="KW-0007">Acetylation</keyword>
<keyword id="KW-0113">Calvin cycle</keyword>
<keyword id="KW-0120">Carbon dioxide fixation</keyword>
<keyword id="KW-0150">Chloroplast</keyword>
<keyword id="KW-1015">Disulfide bond</keyword>
<keyword id="KW-0456">Lyase</keyword>
<keyword id="KW-0460">Magnesium</keyword>
<keyword id="KW-0479">Metal-binding</keyword>
<keyword id="KW-0488">Methylation</keyword>
<keyword id="KW-0503">Monooxygenase</keyword>
<keyword id="KW-0560">Oxidoreductase</keyword>
<keyword id="KW-0601">Photorespiration</keyword>
<keyword id="KW-0602">Photosynthesis</keyword>
<keyword id="KW-0934">Plastid</keyword>
<protein>
    <recommendedName>
        <fullName evidence="1">Ribulose bisphosphate carboxylase large chain</fullName>
        <shortName evidence="1">RuBisCO large subunit</shortName>
        <ecNumber evidence="1">4.1.1.39</ecNumber>
    </recommendedName>
</protein>
<evidence type="ECO:0000255" key="1">
    <source>
        <dbReference type="HAMAP-Rule" id="MF_01338"/>
    </source>
</evidence>
<evidence type="ECO:0000305" key="2"/>
<organism>
    <name type="scientific">Mesostigma viride</name>
    <name type="common">Green alga</name>
    <dbReference type="NCBI Taxonomy" id="41882"/>
    <lineage>
        <taxon>Eukaryota</taxon>
        <taxon>Viridiplantae</taxon>
        <taxon>Streptophyta</taxon>
        <taxon>Mesostigmatophyceae</taxon>
        <taxon>Mesostigmatales</taxon>
        <taxon>Mesostigmataceae</taxon>
        <taxon>Mesostigma</taxon>
    </lineage>
</organism>
<reference key="1">
    <citation type="journal article" date="2000" name="Nature">
        <title>Ancestral chloroplast genome in Mesostigma viride reveals an early branch of green plant evolution.</title>
        <authorList>
            <person name="Lemieux C."/>
            <person name="Otis C."/>
            <person name="Turmel M."/>
        </authorList>
    </citation>
    <scope>NUCLEOTIDE SEQUENCE [LARGE SCALE GENOMIC DNA]</scope>
    <source>
        <strain>NIES-296 / KY-14 / CCMP 2046</strain>
    </source>
</reference>
<reference key="2">
    <citation type="journal article" date="1995" name="Phycol. Res.">
        <title>Phylogeny of genera of Prasinophyceae and Pedinophyceae (Chlorophyta) deduced from molecular analysis of the rbcL gene.</title>
        <authorList>
            <person name="Daugbjerg N."/>
            <person name="Moestrup O."/>
            <person name="Arctander P."/>
        </authorList>
    </citation>
    <scope>NUCLEOTIDE SEQUENCE [GENOMIC DNA] OF 12-376</scope>
    <source>
        <strain>I-9239</strain>
    </source>
</reference>
<sequence length="475" mass="52536">MSPKTETKAGTGFKAGVKDYKLTYYTPDYVVKDTDILAAFRMTPQPGVPPEECGAAVAAESSTGTWTTVWTDGLTSLDRYKGRCYDLEPVAGEENQYIAYVAYPIDLFEEGSVTNLFTSIVGNVFGFKALRALRLEDLRIPVAYVKTFQGPPHGIQVERDKLNKYGRPLLGCTIKPKLGLSAKNYGRACYECLRGGLDFTKDDENVNSQPFMRWRDRFLFVAEAIFKSQSETGEIKGHYLNATAATCEEMLKRAAYAKELGVPIIMHDYLTGGFTANTSLAAYCRDNGLLLHIHRAMHAVIDRQKNHGIHFRVLAKALRLSGGDHLHSGTVVGKLEGEREVTLGFVDLMRDDYIEKDRSRGVYFTQDWCSMGGVMPVASGGIHVWHMPALTEIFGDDSCLQFGGGTLGHPWGNAPGAVANRVALEACVQARNEGRDLAREGNDVIRAACKWSPELAAACEVWKEIKFEFETIDTL</sequence>
<name>RBL_MESVI</name>
<dbReference type="EC" id="4.1.1.39" evidence="1"/>
<dbReference type="EMBL" id="AF166114">
    <property type="protein sequence ID" value="AAF43815.1"/>
    <property type="molecule type" value="Genomic_DNA"/>
</dbReference>
<dbReference type="EMBL" id="U30282">
    <property type="protein sequence ID" value="AAA87208.1"/>
    <property type="molecule type" value="Genomic_DNA"/>
</dbReference>
<dbReference type="RefSeq" id="NP_038374.1">
    <property type="nucleotide sequence ID" value="NC_002186.1"/>
</dbReference>
<dbReference type="SMR" id="Q9MUT6"/>
<dbReference type="GeneID" id="800876"/>
<dbReference type="GO" id="GO:0009507">
    <property type="term" value="C:chloroplast"/>
    <property type="evidence" value="ECO:0007669"/>
    <property type="project" value="UniProtKB-SubCell"/>
</dbReference>
<dbReference type="GO" id="GO:0000287">
    <property type="term" value="F:magnesium ion binding"/>
    <property type="evidence" value="ECO:0007669"/>
    <property type="project" value="UniProtKB-UniRule"/>
</dbReference>
<dbReference type="GO" id="GO:0004497">
    <property type="term" value="F:monooxygenase activity"/>
    <property type="evidence" value="ECO:0007669"/>
    <property type="project" value="UniProtKB-KW"/>
</dbReference>
<dbReference type="GO" id="GO:0016984">
    <property type="term" value="F:ribulose-bisphosphate carboxylase activity"/>
    <property type="evidence" value="ECO:0007669"/>
    <property type="project" value="UniProtKB-UniRule"/>
</dbReference>
<dbReference type="GO" id="GO:0009853">
    <property type="term" value="P:photorespiration"/>
    <property type="evidence" value="ECO:0007669"/>
    <property type="project" value="UniProtKB-KW"/>
</dbReference>
<dbReference type="GO" id="GO:0019253">
    <property type="term" value="P:reductive pentose-phosphate cycle"/>
    <property type="evidence" value="ECO:0007669"/>
    <property type="project" value="UniProtKB-UniRule"/>
</dbReference>
<dbReference type="CDD" id="cd08212">
    <property type="entry name" value="RuBisCO_large_I"/>
    <property type="match status" value="1"/>
</dbReference>
<dbReference type="FunFam" id="3.20.20.110:FF:000001">
    <property type="entry name" value="Ribulose bisphosphate carboxylase large chain"/>
    <property type="match status" value="1"/>
</dbReference>
<dbReference type="FunFam" id="3.30.70.150:FF:000001">
    <property type="entry name" value="Ribulose bisphosphate carboxylase large chain"/>
    <property type="match status" value="1"/>
</dbReference>
<dbReference type="Gene3D" id="3.20.20.110">
    <property type="entry name" value="Ribulose bisphosphate carboxylase, large subunit, C-terminal domain"/>
    <property type="match status" value="1"/>
</dbReference>
<dbReference type="Gene3D" id="3.30.70.150">
    <property type="entry name" value="RuBisCO large subunit, N-terminal domain"/>
    <property type="match status" value="1"/>
</dbReference>
<dbReference type="HAMAP" id="MF_01338">
    <property type="entry name" value="RuBisCO_L_type1"/>
    <property type="match status" value="1"/>
</dbReference>
<dbReference type="InterPro" id="IPR033966">
    <property type="entry name" value="RuBisCO"/>
</dbReference>
<dbReference type="InterPro" id="IPR020878">
    <property type="entry name" value="RuBisCo_large_chain_AS"/>
</dbReference>
<dbReference type="InterPro" id="IPR000685">
    <property type="entry name" value="RuBisCO_lsu_C"/>
</dbReference>
<dbReference type="InterPro" id="IPR036376">
    <property type="entry name" value="RuBisCO_lsu_C_sf"/>
</dbReference>
<dbReference type="InterPro" id="IPR017443">
    <property type="entry name" value="RuBisCO_lsu_fd_N"/>
</dbReference>
<dbReference type="InterPro" id="IPR036422">
    <property type="entry name" value="RuBisCO_lsu_N_sf"/>
</dbReference>
<dbReference type="InterPro" id="IPR020888">
    <property type="entry name" value="RuBisCO_lsuI"/>
</dbReference>
<dbReference type="NCBIfam" id="NF003252">
    <property type="entry name" value="PRK04208.1"/>
    <property type="match status" value="1"/>
</dbReference>
<dbReference type="PANTHER" id="PTHR42704">
    <property type="entry name" value="RIBULOSE BISPHOSPHATE CARBOXYLASE"/>
    <property type="match status" value="1"/>
</dbReference>
<dbReference type="PANTHER" id="PTHR42704:SF17">
    <property type="entry name" value="RIBULOSE BISPHOSPHATE CARBOXYLASE LARGE CHAIN"/>
    <property type="match status" value="1"/>
</dbReference>
<dbReference type="Pfam" id="PF00016">
    <property type="entry name" value="RuBisCO_large"/>
    <property type="match status" value="1"/>
</dbReference>
<dbReference type="Pfam" id="PF02788">
    <property type="entry name" value="RuBisCO_large_N"/>
    <property type="match status" value="1"/>
</dbReference>
<dbReference type="SFLD" id="SFLDG01052">
    <property type="entry name" value="RuBisCO"/>
    <property type="match status" value="1"/>
</dbReference>
<dbReference type="SFLD" id="SFLDS00014">
    <property type="entry name" value="RuBisCO"/>
    <property type="match status" value="1"/>
</dbReference>
<dbReference type="SFLD" id="SFLDG00301">
    <property type="entry name" value="RuBisCO-like_proteins"/>
    <property type="match status" value="1"/>
</dbReference>
<dbReference type="SUPFAM" id="SSF51649">
    <property type="entry name" value="RuBisCo, C-terminal domain"/>
    <property type="match status" value="1"/>
</dbReference>
<dbReference type="SUPFAM" id="SSF54966">
    <property type="entry name" value="RuBisCO, large subunit, small (N-terminal) domain"/>
    <property type="match status" value="1"/>
</dbReference>
<dbReference type="PROSITE" id="PS00157">
    <property type="entry name" value="RUBISCO_LARGE"/>
    <property type="match status" value="1"/>
</dbReference>